<protein>
    <recommendedName>
        <fullName evidence="1">Large ribosomal subunit protein uL4</fullName>
    </recommendedName>
    <alternativeName>
        <fullName evidence="3">50S ribosomal protein L4</fullName>
    </alternativeName>
</protein>
<gene>
    <name evidence="1" type="primary">rplD</name>
    <name type="ordered locus">RHE_CH01676</name>
</gene>
<keyword id="KW-1185">Reference proteome</keyword>
<keyword id="KW-0687">Ribonucleoprotein</keyword>
<keyword id="KW-0689">Ribosomal protein</keyword>
<keyword id="KW-0694">RNA-binding</keyword>
<keyword id="KW-0699">rRNA-binding</keyword>
<accession>Q2K9L5</accession>
<evidence type="ECO:0000255" key="1">
    <source>
        <dbReference type="HAMAP-Rule" id="MF_01328"/>
    </source>
</evidence>
<evidence type="ECO:0000256" key="2">
    <source>
        <dbReference type="SAM" id="MobiDB-lite"/>
    </source>
</evidence>
<evidence type="ECO:0000305" key="3"/>
<name>RL4_RHIEC</name>
<organism>
    <name type="scientific">Rhizobium etli (strain ATCC 51251 / DSM 11541 / JCM 21823 / NBRC 15573 / CFN 42)</name>
    <dbReference type="NCBI Taxonomy" id="347834"/>
    <lineage>
        <taxon>Bacteria</taxon>
        <taxon>Pseudomonadati</taxon>
        <taxon>Pseudomonadota</taxon>
        <taxon>Alphaproteobacteria</taxon>
        <taxon>Hyphomicrobiales</taxon>
        <taxon>Rhizobiaceae</taxon>
        <taxon>Rhizobium/Agrobacterium group</taxon>
        <taxon>Rhizobium</taxon>
    </lineage>
</organism>
<reference key="1">
    <citation type="journal article" date="2006" name="Proc. Natl. Acad. Sci. U.S.A.">
        <title>The partitioned Rhizobium etli genome: genetic and metabolic redundancy in seven interacting replicons.</title>
        <authorList>
            <person name="Gonzalez V."/>
            <person name="Santamaria R.I."/>
            <person name="Bustos P."/>
            <person name="Hernandez-Gonzalez I."/>
            <person name="Medrano-Soto A."/>
            <person name="Moreno-Hagelsieb G."/>
            <person name="Janga S.C."/>
            <person name="Ramirez M.A."/>
            <person name="Jimenez-Jacinto V."/>
            <person name="Collado-Vides J."/>
            <person name="Davila G."/>
        </authorList>
    </citation>
    <scope>NUCLEOTIDE SEQUENCE [LARGE SCALE GENOMIC DNA]</scope>
    <source>
        <strain>ATCC 51251 / DSM 11541 / JCM 21823 / NBRC 15573 / CFN 42</strain>
    </source>
</reference>
<proteinExistence type="inferred from homology"/>
<sequence length="206" mass="22407">MELNVKTLEGKDAGKVSLSDEIFGLEPREDILARVIRWQLAKKQQGTHKAKGRAEVSRTGAKMYKQKGTGRARHHSARAPQFRGGGKAHGPVVRSHEHDLPKKVRALGLRHALSAKIKADDVIVIDNLVAAEAKTKALASAFETLGLTNALFIGGAELDGNFKLAAQNIPNIDVLPIQGINVYDIVRRGKLVLSKAAVEALEERFK</sequence>
<comment type="function">
    <text evidence="1">One of the primary rRNA binding proteins, this protein initially binds near the 5'-end of the 23S rRNA. It is important during the early stages of 50S assembly. It makes multiple contacts with different domains of the 23S rRNA in the assembled 50S subunit and ribosome.</text>
</comment>
<comment type="function">
    <text evidence="1">Forms part of the polypeptide exit tunnel.</text>
</comment>
<comment type="subunit">
    <text evidence="1">Part of the 50S ribosomal subunit.</text>
</comment>
<comment type="similarity">
    <text evidence="1">Belongs to the universal ribosomal protein uL4 family.</text>
</comment>
<feature type="chain" id="PRO_0000242423" description="Large ribosomal subunit protein uL4">
    <location>
        <begin position="1"/>
        <end position="206"/>
    </location>
</feature>
<feature type="region of interest" description="Disordered" evidence="2">
    <location>
        <begin position="63"/>
        <end position="97"/>
    </location>
</feature>
<feature type="compositionally biased region" description="Basic residues" evidence="2">
    <location>
        <begin position="64"/>
        <end position="77"/>
    </location>
</feature>
<dbReference type="EMBL" id="CP000133">
    <property type="protein sequence ID" value="ABC90471.1"/>
    <property type="molecule type" value="Genomic_DNA"/>
</dbReference>
<dbReference type="RefSeq" id="WP_004674918.1">
    <property type="nucleotide sequence ID" value="NC_007761.1"/>
</dbReference>
<dbReference type="SMR" id="Q2K9L5"/>
<dbReference type="GeneID" id="66145857"/>
<dbReference type="KEGG" id="ret:RHE_CH01676"/>
<dbReference type="eggNOG" id="COG0088">
    <property type="taxonomic scope" value="Bacteria"/>
</dbReference>
<dbReference type="HOGENOM" id="CLU_041575_5_1_5"/>
<dbReference type="OrthoDB" id="9803201at2"/>
<dbReference type="Proteomes" id="UP000001936">
    <property type="component" value="Chromosome"/>
</dbReference>
<dbReference type="GO" id="GO:1990904">
    <property type="term" value="C:ribonucleoprotein complex"/>
    <property type="evidence" value="ECO:0007669"/>
    <property type="project" value="UniProtKB-KW"/>
</dbReference>
<dbReference type="GO" id="GO:0005840">
    <property type="term" value="C:ribosome"/>
    <property type="evidence" value="ECO:0007669"/>
    <property type="project" value="UniProtKB-KW"/>
</dbReference>
<dbReference type="GO" id="GO:0019843">
    <property type="term" value="F:rRNA binding"/>
    <property type="evidence" value="ECO:0007669"/>
    <property type="project" value="UniProtKB-UniRule"/>
</dbReference>
<dbReference type="GO" id="GO:0003735">
    <property type="term" value="F:structural constituent of ribosome"/>
    <property type="evidence" value="ECO:0007669"/>
    <property type="project" value="InterPro"/>
</dbReference>
<dbReference type="GO" id="GO:0006412">
    <property type="term" value="P:translation"/>
    <property type="evidence" value="ECO:0007669"/>
    <property type="project" value="UniProtKB-UniRule"/>
</dbReference>
<dbReference type="Gene3D" id="3.40.1370.10">
    <property type="match status" value="1"/>
</dbReference>
<dbReference type="HAMAP" id="MF_01328_B">
    <property type="entry name" value="Ribosomal_uL4_B"/>
    <property type="match status" value="1"/>
</dbReference>
<dbReference type="InterPro" id="IPR002136">
    <property type="entry name" value="Ribosomal_uL4"/>
</dbReference>
<dbReference type="InterPro" id="IPR013005">
    <property type="entry name" value="Ribosomal_uL4-like"/>
</dbReference>
<dbReference type="InterPro" id="IPR023574">
    <property type="entry name" value="Ribosomal_uL4_dom_sf"/>
</dbReference>
<dbReference type="NCBIfam" id="TIGR03953">
    <property type="entry name" value="rplD_bact"/>
    <property type="match status" value="1"/>
</dbReference>
<dbReference type="PANTHER" id="PTHR10746">
    <property type="entry name" value="50S RIBOSOMAL PROTEIN L4"/>
    <property type="match status" value="1"/>
</dbReference>
<dbReference type="PANTHER" id="PTHR10746:SF6">
    <property type="entry name" value="LARGE RIBOSOMAL SUBUNIT PROTEIN UL4M"/>
    <property type="match status" value="1"/>
</dbReference>
<dbReference type="Pfam" id="PF00573">
    <property type="entry name" value="Ribosomal_L4"/>
    <property type="match status" value="1"/>
</dbReference>
<dbReference type="SUPFAM" id="SSF52166">
    <property type="entry name" value="Ribosomal protein L4"/>
    <property type="match status" value="1"/>
</dbReference>